<feature type="chain" id="PRO_1000163979" description="Ornithine carbamoyltransferase">
    <location>
        <begin position="1"/>
        <end position="308"/>
    </location>
</feature>
<feature type="binding site" evidence="2">
    <location>
        <begin position="56"/>
        <end position="59"/>
    </location>
    <ligand>
        <name>carbamoyl phosphate</name>
        <dbReference type="ChEBI" id="CHEBI:58228"/>
    </ligand>
</feature>
<feature type="binding site" evidence="2">
    <location>
        <position position="83"/>
    </location>
    <ligand>
        <name>carbamoyl phosphate</name>
        <dbReference type="ChEBI" id="CHEBI:58228"/>
    </ligand>
</feature>
<feature type="binding site" evidence="2">
    <location>
        <position position="107"/>
    </location>
    <ligand>
        <name>carbamoyl phosphate</name>
        <dbReference type="ChEBI" id="CHEBI:58228"/>
    </ligand>
</feature>
<feature type="binding site" evidence="2">
    <location>
        <begin position="134"/>
        <end position="137"/>
    </location>
    <ligand>
        <name>carbamoyl phosphate</name>
        <dbReference type="ChEBI" id="CHEBI:58228"/>
    </ligand>
</feature>
<feature type="binding site" evidence="2">
    <location>
        <position position="165"/>
    </location>
    <ligand>
        <name>L-ornithine</name>
        <dbReference type="ChEBI" id="CHEBI:46911"/>
    </ligand>
</feature>
<feature type="binding site" evidence="2">
    <location>
        <position position="225"/>
    </location>
    <ligand>
        <name>L-ornithine</name>
        <dbReference type="ChEBI" id="CHEBI:46911"/>
    </ligand>
</feature>
<feature type="binding site" evidence="2">
    <location>
        <begin position="229"/>
        <end position="230"/>
    </location>
    <ligand>
        <name>L-ornithine</name>
        <dbReference type="ChEBI" id="CHEBI:46911"/>
    </ligand>
</feature>
<feature type="binding site" evidence="2">
    <location>
        <begin position="266"/>
        <end position="267"/>
    </location>
    <ligand>
        <name>carbamoyl phosphate</name>
        <dbReference type="ChEBI" id="CHEBI:58228"/>
    </ligand>
</feature>
<feature type="binding site" evidence="2">
    <location>
        <position position="294"/>
    </location>
    <ligand>
        <name>carbamoyl phosphate</name>
        <dbReference type="ChEBI" id="CHEBI:58228"/>
    </ligand>
</feature>
<dbReference type="EC" id="2.1.3.3" evidence="2"/>
<dbReference type="EMBL" id="CP001150">
    <property type="protein sequence ID" value="ACM00172.1"/>
    <property type="molecule type" value="Genomic_DNA"/>
</dbReference>
<dbReference type="RefSeq" id="WP_012643626.1">
    <property type="nucleotide sequence ID" value="NC_011963.1"/>
</dbReference>
<dbReference type="SMR" id="B9KMW0"/>
<dbReference type="GeneID" id="67445790"/>
<dbReference type="KEGG" id="rsk:RSKD131_0312"/>
<dbReference type="HOGENOM" id="CLU_043846_3_2_5"/>
<dbReference type="UniPathway" id="UPA00254">
    <property type="reaction ID" value="UER00365"/>
</dbReference>
<dbReference type="GO" id="GO:0005737">
    <property type="term" value="C:cytoplasm"/>
    <property type="evidence" value="ECO:0007669"/>
    <property type="project" value="UniProtKB-SubCell"/>
</dbReference>
<dbReference type="GO" id="GO:0016597">
    <property type="term" value="F:amino acid binding"/>
    <property type="evidence" value="ECO:0007669"/>
    <property type="project" value="InterPro"/>
</dbReference>
<dbReference type="GO" id="GO:0004585">
    <property type="term" value="F:ornithine carbamoyltransferase activity"/>
    <property type="evidence" value="ECO:0007669"/>
    <property type="project" value="UniProtKB-UniRule"/>
</dbReference>
<dbReference type="GO" id="GO:0042450">
    <property type="term" value="P:arginine biosynthetic process via ornithine"/>
    <property type="evidence" value="ECO:0007669"/>
    <property type="project" value="TreeGrafter"/>
</dbReference>
<dbReference type="GO" id="GO:0019547">
    <property type="term" value="P:arginine catabolic process to ornithine"/>
    <property type="evidence" value="ECO:0007669"/>
    <property type="project" value="UniProtKB-UniRule"/>
</dbReference>
<dbReference type="GO" id="GO:0019240">
    <property type="term" value="P:citrulline biosynthetic process"/>
    <property type="evidence" value="ECO:0007669"/>
    <property type="project" value="TreeGrafter"/>
</dbReference>
<dbReference type="FunFam" id="3.40.50.1370:FF:000008">
    <property type="entry name" value="Ornithine carbamoyltransferase"/>
    <property type="match status" value="1"/>
</dbReference>
<dbReference type="Gene3D" id="3.40.50.1370">
    <property type="entry name" value="Aspartate/ornithine carbamoyltransferase"/>
    <property type="match status" value="2"/>
</dbReference>
<dbReference type="HAMAP" id="MF_01109">
    <property type="entry name" value="OTCase"/>
    <property type="match status" value="1"/>
</dbReference>
<dbReference type="InterPro" id="IPR006132">
    <property type="entry name" value="Asp/Orn_carbamoyltranf_P-bd"/>
</dbReference>
<dbReference type="InterPro" id="IPR006130">
    <property type="entry name" value="Asp/Orn_carbamoylTrfase"/>
</dbReference>
<dbReference type="InterPro" id="IPR036901">
    <property type="entry name" value="Asp/Orn_carbamoylTrfase_sf"/>
</dbReference>
<dbReference type="InterPro" id="IPR006131">
    <property type="entry name" value="Asp_carbamoyltransf_Asp/Orn-bd"/>
</dbReference>
<dbReference type="InterPro" id="IPR002292">
    <property type="entry name" value="Orn/put_carbamltrans"/>
</dbReference>
<dbReference type="InterPro" id="IPR024904">
    <property type="entry name" value="OTCase_ArgI"/>
</dbReference>
<dbReference type="NCBIfam" id="TIGR00658">
    <property type="entry name" value="orni_carb_tr"/>
    <property type="match status" value="1"/>
</dbReference>
<dbReference type="NCBIfam" id="NF001986">
    <property type="entry name" value="PRK00779.1"/>
    <property type="match status" value="1"/>
</dbReference>
<dbReference type="PANTHER" id="PTHR45753">
    <property type="entry name" value="ORNITHINE CARBAMOYLTRANSFERASE, MITOCHONDRIAL"/>
    <property type="match status" value="1"/>
</dbReference>
<dbReference type="PANTHER" id="PTHR45753:SF3">
    <property type="entry name" value="ORNITHINE TRANSCARBAMYLASE, MITOCHONDRIAL"/>
    <property type="match status" value="1"/>
</dbReference>
<dbReference type="Pfam" id="PF00185">
    <property type="entry name" value="OTCace"/>
    <property type="match status" value="1"/>
</dbReference>
<dbReference type="Pfam" id="PF02729">
    <property type="entry name" value="OTCace_N"/>
    <property type="match status" value="1"/>
</dbReference>
<dbReference type="PRINTS" id="PR00100">
    <property type="entry name" value="AOTCASE"/>
</dbReference>
<dbReference type="PRINTS" id="PR00102">
    <property type="entry name" value="OTCASE"/>
</dbReference>
<dbReference type="SUPFAM" id="SSF53671">
    <property type="entry name" value="Aspartate/ornithine carbamoyltransferase"/>
    <property type="match status" value="1"/>
</dbReference>
<dbReference type="PROSITE" id="PS00097">
    <property type="entry name" value="CARBAMOYLTRANSFERASE"/>
    <property type="match status" value="1"/>
</dbReference>
<organism>
    <name type="scientific">Cereibacter sphaeroides (strain KD131 / KCTC 12085)</name>
    <name type="common">Rhodobacter sphaeroides</name>
    <dbReference type="NCBI Taxonomy" id="557760"/>
    <lineage>
        <taxon>Bacteria</taxon>
        <taxon>Pseudomonadati</taxon>
        <taxon>Pseudomonadota</taxon>
        <taxon>Alphaproteobacteria</taxon>
        <taxon>Rhodobacterales</taxon>
        <taxon>Paracoccaceae</taxon>
        <taxon>Cereibacter</taxon>
    </lineage>
</organism>
<sequence length="308" mass="34322">MNHFLDIHKTDTAELRQMMDSAHAMKAARKGRPKGQFDEDQPLAGRMVALIFEKPSTRTRVSFDVGVRQMGGQTMVLSGKEMQLGHGETIADTARVLSRYVDLIMIRTFEEATLLEMAEHATVPVINGLTNRTHPCQIMADVMTYEEHRGPIAGRKVVWAGDGNNVCASFLHAAGQFGFDFTFTGPPTLDPEAEFVGYAREKGRRVSIERDPAKAVAGADLVVTDTWVSMHDPQSARERRHNQLRPYQVNEALMAQAKPDALFMHCLPAHRDDEATSAVMDGPHSVIFDEAENRLHAQKAIMRWCLGL</sequence>
<keyword id="KW-0056">Arginine metabolism</keyword>
<keyword id="KW-0963">Cytoplasm</keyword>
<keyword id="KW-0808">Transferase</keyword>
<gene>
    <name evidence="2" type="primary">arcB</name>
    <name type="ordered locus">RSKD131_0312</name>
</gene>
<accession>B9KMW0</accession>
<evidence type="ECO:0000250" key="1"/>
<evidence type="ECO:0000255" key="2">
    <source>
        <dbReference type="HAMAP-Rule" id="MF_01109"/>
    </source>
</evidence>
<proteinExistence type="inferred from homology"/>
<reference key="1">
    <citation type="journal article" date="2009" name="J. Bacteriol.">
        <title>Complete genome sequence of Rhodobacter sphaeroides KD131.</title>
        <authorList>
            <person name="Lim S.-K."/>
            <person name="Kim S.J."/>
            <person name="Cha S.H."/>
            <person name="Oh Y.-K."/>
            <person name="Rhee H.-J."/>
            <person name="Kim M.-S."/>
            <person name="Lee J.K."/>
        </authorList>
    </citation>
    <scope>NUCLEOTIDE SEQUENCE [LARGE SCALE GENOMIC DNA]</scope>
    <source>
        <strain>KD131 / KCTC 12085</strain>
    </source>
</reference>
<protein>
    <recommendedName>
        <fullName evidence="2">Ornithine carbamoyltransferase</fullName>
        <shortName evidence="2">OTCase</shortName>
        <ecNumber evidence="2">2.1.3.3</ecNumber>
    </recommendedName>
</protein>
<comment type="function">
    <text evidence="1">Reversibly catalyzes the transfer of the carbamoyl group from carbamoyl phosphate (CP) to the N(epsilon) atom of ornithine (ORN) to produce L-citrulline.</text>
</comment>
<comment type="catalytic activity">
    <reaction evidence="2">
        <text>carbamoyl phosphate + L-ornithine = L-citrulline + phosphate + H(+)</text>
        <dbReference type="Rhea" id="RHEA:19513"/>
        <dbReference type="ChEBI" id="CHEBI:15378"/>
        <dbReference type="ChEBI" id="CHEBI:43474"/>
        <dbReference type="ChEBI" id="CHEBI:46911"/>
        <dbReference type="ChEBI" id="CHEBI:57743"/>
        <dbReference type="ChEBI" id="CHEBI:58228"/>
        <dbReference type="EC" id="2.1.3.3"/>
    </reaction>
</comment>
<comment type="pathway">
    <text evidence="2">Amino-acid degradation; L-arginine degradation via ADI pathway; carbamoyl phosphate from L-arginine: step 2/2.</text>
</comment>
<comment type="subcellular location">
    <subcellularLocation>
        <location evidence="2">Cytoplasm</location>
    </subcellularLocation>
</comment>
<comment type="similarity">
    <text evidence="2">Belongs to the aspartate/ornithine carbamoyltransferase superfamily. OTCase family.</text>
</comment>
<name>OTC_CERSK</name>